<organism>
    <name type="scientific">Citrobacter koseri (strain ATCC BAA-895 / CDC 4225-83 / SGSC4696)</name>
    <dbReference type="NCBI Taxonomy" id="290338"/>
    <lineage>
        <taxon>Bacteria</taxon>
        <taxon>Pseudomonadati</taxon>
        <taxon>Pseudomonadota</taxon>
        <taxon>Gammaproteobacteria</taxon>
        <taxon>Enterobacterales</taxon>
        <taxon>Enterobacteriaceae</taxon>
        <taxon>Citrobacter</taxon>
    </lineage>
</organism>
<feature type="chain" id="PRO_1000044905" description="Putative double-stranded DNA mimic protein CKO_01325">
    <location>
        <begin position="1"/>
        <end position="109"/>
    </location>
</feature>
<dbReference type="EMBL" id="CP000822">
    <property type="protein sequence ID" value="ABV12462.1"/>
    <property type="molecule type" value="Genomic_DNA"/>
</dbReference>
<dbReference type="RefSeq" id="WP_012132205.1">
    <property type="nucleotide sequence ID" value="NC_009792.1"/>
</dbReference>
<dbReference type="SMR" id="A8AG49"/>
<dbReference type="STRING" id="290338.CKO_01325"/>
<dbReference type="GeneID" id="45135432"/>
<dbReference type="KEGG" id="cko:CKO_01325"/>
<dbReference type="HOGENOM" id="CLU_143392_0_0_6"/>
<dbReference type="OrthoDB" id="5677388at2"/>
<dbReference type="Proteomes" id="UP000008148">
    <property type="component" value="Chromosome"/>
</dbReference>
<dbReference type="Gene3D" id="3.10.450.140">
    <property type="entry name" value="dsDNA mimic, putative"/>
    <property type="match status" value="1"/>
</dbReference>
<dbReference type="HAMAP" id="MF_00680">
    <property type="entry name" value="Put_dsDNA_mimic"/>
    <property type="match status" value="1"/>
</dbReference>
<dbReference type="InterPro" id="IPR007376">
    <property type="entry name" value="dsDNA_mimic_put"/>
</dbReference>
<dbReference type="InterPro" id="IPR036763">
    <property type="entry name" value="Put_dsDNA_mimic_sf"/>
</dbReference>
<dbReference type="NCBIfam" id="NF003469">
    <property type="entry name" value="PRK05094.1"/>
    <property type="match status" value="1"/>
</dbReference>
<dbReference type="Pfam" id="PF04269">
    <property type="entry name" value="DUF440"/>
    <property type="match status" value="1"/>
</dbReference>
<dbReference type="PIRSF" id="PIRSF004916">
    <property type="entry name" value="UCP004916"/>
    <property type="match status" value="1"/>
</dbReference>
<dbReference type="SUPFAM" id="SSF102816">
    <property type="entry name" value="Putative dsDNA mimic"/>
    <property type="match status" value="1"/>
</dbReference>
<gene>
    <name type="ordered locus">CKO_01325</name>
</gene>
<evidence type="ECO:0000255" key="1">
    <source>
        <dbReference type="HAMAP-Rule" id="MF_00680"/>
    </source>
</evidence>
<keyword id="KW-1185">Reference proteome</keyword>
<reference key="1">
    <citation type="submission" date="2007-08" db="EMBL/GenBank/DDBJ databases">
        <authorList>
            <consortium name="The Citrobacter koseri Genome Sequencing Project"/>
            <person name="McClelland M."/>
            <person name="Sanderson E.K."/>
            <person name="Porwollik S."/>
            <person name="Spieth J."/>
            <person name="Clifton W.S."/>
            <person name="Latreille P."/>
            <person name="Courtney L."/>
            <person name="Wang C."/>
            <person name="Pepin K."/>
            <person name="Bhonagiri V."/>
            <person name="Nash W."/>
            <person name="Johnson M."/>
            <person name="Thiruvilangam P."/>
            <person name="Wilson R."/>
        </authorList>
    </citation>
    <scope>NUCLEOTIDE SEQUENCE [LARGE SCALE GENOMIC DNA]</scope>
    <source>
        <strain>ATCC BAA-895 / CDC 4225-83 / SGSC4696</strain>
    </source>
</reference>
<name>Y1325_CITK8</name>
<sequence>MEMDLNNRLTEDETLEQAYDIFLELAADNLDPADIILFNLQFEERGGAELFDPSEDWQEHVDFDLNPDFFAEVVIGLADSEDGEINDIFARVLLCREKDHKLCHILWRE</sequence>
<accession>A8AG49</accession>
<proteinExistence type="inferred from homology"/>
<protein>
    <recommendedName>
        <fullName evidence="1">Putative double-stranded DNA mimic protein CKO_01325</fullName>
    </recommendedName>
</protein>
<comment type="function">
    <text evidence="1">May act as a double-stranded DNA (dsDNA) mimic. Probably regulates the activity of a dsDNA-binding protein.</text>
</comment>
<comment type="similarity">
    <text evidence="1">Belongs to the putative dsDNA mimic protein family.</text>
</comment>